<reference key="1">
    <citation type="journal article" date="2009" name="PLoS Pathog.">
        <title>Molecular evolutionary consequences of niche restriction in Francisella tularensis, a facultative intracellular pathogen.</title>
        <authorList>
            <person name="Larsson P."/>
            <person name="Elfsmark D."/>
            <person name="Svensson K."/>
            <person name="Wikstroem P."/>
            <person name="Forsman M."/>
            <person name="Brettin T."/>
            <person name="Keim P."/>
            <person name="Johansson A."/>
        </authorList>
    </citation>
    <scope>NUCLEOTIDE SEQUENCE [LARGE SCALE GENOMIC DNA]</scope>
    <source>
        <strain>FSC147</strain>
    </source>
</reference>
<proteinExistence type="inferred from homology"/>
<protein>
    <recommendedName>
        <fullName evidence="1">DNA ligase</fullName>
        <ecNumber evidence="1">6.5.1.2</ecNumber>
    </recommendedName>
    <alternativeName>
        <fullName evidence="1">Polydeoxyribonucleotide synthase [NAD(+)]</fullName>
    </alternativeName>
</protein>
<sequence>MTPNEFFSIKYHILAKAELKAYIDKLADYLSQQSYLYHTLDKPIISDSDYDKLFRLLQDLVNDNPQFKPINSVLDRVGGEVLAGFETIKHKKKMTSLANVFSLEELRDFYDKIEYDIELECEPKMDGLAISIFYKNGKFDYAVTRGDGIQGEKVSENVKTIRNVPLKLNTSNPPEELEVRGEIILDKQSFLSLNEYMQTHENKTFANPRNAAAGSIRMLDSKVVAKRPLKLYSYGIGYFSKDFVYPETQFELMQLLQSFGFTISDNMFLAKNFSEVEEYHHKMSHQRADLAYDIDGLVFKVNNIKLQDTIGYTARGPKWAIAYKFPAEEVESEVLNVEFQVGRTGAITPVARLKPVAVGGVIVSNATLHNINEIKRKDIRVGDRVIVRRAGDVIPEVVKSLPQYRKSDAQMVEMPTNCPVCDSKIENVNDQAIYRCTGGWHCQAQTTERLKHFVSRKAMDIDKLGAKLIEQLVAANLIKYPADIYKLNFEQLTGLERMAAKSSQNVLDSITKSKEPSLARFIFAIGIKDIGEVSSDALANHFGSLESFRDAKFEELIEINDIGEIMANNIVSFWHDSLNIKIVEEFLAIGIKIQNPVKVEHAYNESFTGKTVVITGSFENYGRTELTQLLKSIGAKVTSSVSKKTDMVICGDNAGSKLTKAQELGVEVILEDNLKDLL</sequence>
<accession>B2SFT1</accession>
<organism>
    <name type="scientific">Francisella tularensis subsp. mediasiatica (strain FSC147)</name>
    <dbReference type="NCBI Taxonomy" id="441952"/>
    <lineage>
        <taxon>Bacteria</taxon>
        <taxon>Pseudomonadati</taxon>
        <taxon>Pseudomonadota</taxon>
        <taxon>Gammaproteobacteria</taxon>
        <taxon>Thiotrichales</taxon>
        <taxon>Francisellaceae</taxon>
        <taxon>Francisella</taxon>
    </lineage>
</organism>
<comment type="function">
    <text evidence="1">DNA ligase that catalyzes the formation of phosphodiester linkages between 5'-phosphoryl and 3'-hydroxyl groups in double-stranded DNA using NAD as a coenzyme and as the energy source for the reaction. It is essential for DNA replication and repair of damaged DNA.</text>
</comment>
<comment type="catalytic activity">
    <reaction evidence="1">
        <text>NAD(+) + (deoxyribonucleotide)n-3'-hydroxyl + 5'-phospho-(deoxyribonucleotide)m = (deoxyribonucleotide)n+m + AMP + beta-nicotinamide D-nucleotide.</text>
        <dbReference type="EC" id="6.5.1.2"/>
    </reaction>
</comment>
<comment type="cofactor">
    <cofactor evidence="1">
        <name>Mg(2+)</name>
        <dbReference type="ChEBI" id="CHEBI:18420"/>
    </cofactor>
    <cofactor evidence="1">
        <name>Mn(2+)</name>
        <dbReference type="ChEBI" id="CHEBI:29035"/>
    </cofactor>
</comment>
<comment type="similarity">
    <text evidence="1">Belongs to the NAD-dependent DNA ligase family. LigA subfamily.</text>
</comment>
<keyword id="KW-0227">DNA damage</keyword>
<keyword id="KW-0234">DNA repair</keyword>
<keyword id="KW-0235">DNA replication</keyword>
<keyword id="KW-0436">Ligase</keyword>
<keyword id="KW-0460">Magnesium</keyword>
<keyword id="KW-0464">Manganese</keyword>
<keyword id="KW-0479">Metal-binding</keyword>
<keyword id="KW-0520">NAD</keyword>
<keyword id="KW-0862">Zinc</keyword>
<evidence type="ECO:0000255" key="1">
    <source>
        <dbReference type="HAMAP-Rule" id="MF_01588"/>
    </source>
</evidence>
<name>DNLJ_FRATM</name>
<feature type="chain" id="PRO_0000380386" description="DNA ligase">
    <location>
        <begin position="1"/>
        <end position="678"/>
    </location>
</feature>
<feature type="domain" description="BRCT" evidence="1">
    <location>
        <begin position="602"/>
        <end position="678"/>
    </location>
</feature>
<feature type="active site" description="N6-AMP-lysine intermediate" evidence="1">
    <location>
        <position position="124"/>
    </location>
</feature>
<feature type="binding site" evidence="1">
    <location>
        <begin position="47"/>
        <end position="51"/>
    </location>
    <ligand>
        <name>NAD(+)</name>
        <dbReference type="ChEBI" id="CHEBI:57540"/>
    </ligand>
</feature>
<feature type="binding site" evidence="1">
    <location>
        <begin position="96"/>
        <end position="97"/>
    </location>
    <ligand>
        <name>NAD(+)</name>
        <dbReference type="ChEBI" id="CHEBI:57540"/>
    </ligand>
</feature>
<feature type="binding site" evidence="1">
    <location>
        <position position="122"/>
    </location>
    <ligand>
        <name>NAD(+)</name>
        <dbReference type="ChEBI" id="CHEBI:57540"/>
    </ligand>
</feature>
<feature type="binding site" evidence="1">
    <location>
        <position position="145"/>
    </location>
    <ligand>
        <name>NAD(+)</name>
        <dbReference type="ChEBI" id="CHEBI:57540"/>
    </ligand>
</feature>
<feature type="binding site" evidence="1">
    <location>
        <position position="182"/>
    </location>
    <ligand>
        <name>NAD(+)</name>
        <dbReference type="ChEBI" id="CHEBI:57540"/>
    </ligand>
</feature>
<feature type="binding site" evidence="1">
    <location>
        <position position="300"/>
    </location>
    <ligand>
        <name>NAD(+)</name>
        <dbReference type="ChEBI" id="CHEBI:57540"/>
    </ligand>
</feature>
<feature type="binding site" evidence="1">
    <location>
        <position position="324"/>
    </location>
    <ligand>
        <name>NAD(+)</name>
        <dbReference type="ChEBI" id="CHEBI:57540"/>
    </ligand>
</feature>
<feature type="binding site" evidence="1">
    <location>
        <position position="418"/>
    </location>
    <ligand>
        <name>Zn(2+)</name>
        <dbReference type="ChEBI" id="CHEBI:29105"/>
    </ligand>
</feature>
<feature type="binding site" evidence="1">
    <location>
        <position position="421"/>
    </location>
    <ligand>
        <name>Zn(2+)</name>
        <dbReference type="ChEBI" id="CHEBI:29105"/>
    </ligand>
</feature>
<feature type="binding site" evidence="1">
    <location>
        <position position="436"/>
    </location>
    <ligand>
        <name>Zn(2+)</name>
        <dbReference type="ChEBI" id="CHEBI:29105"/>
    </ligand>
</feature>
<feature type="binding site" evidence="1">
    <location>
        <position position="442"/>
    </location>
    <ligand>
        <name>Zn(2+)</name>
        <dbReference type="ChEBI" id="CHEBI:29105"/>
    </ligand>
</feature>
<gene>
    <name evidence="1" type="primary">ligA</name>
    <name type="ordered locus">FTM_0637</name>
</gene>
<dbReference type="EC" id="6.5.1.2" evidence="1"/>
<dbReference type="EMBL" id="CP000915">
    <property type="protein sequence ID" value="ACD30624.1"/>
    <property type="molecule type" value="Genomic_DNA"/>
</dbReference>
<dbReference type="SMR" id="B2SFT1"/>
<dbReference type="KEGG" id="ftm:FTM_0637"/>
<dbReference type="HOGENOM" id="CLU_007764_2_1_6"/>
<dbReference type="GO" id="GO:0005829">
    <property type="term" value="C:cytosol"/>
    <property type="evidence" value="ECO:0007669"/>
    <property type="project" value="TreeGrafter"/>
</dbReference>
<dbReference type="GO" id="GO:0003677">
    <property type="term" value="F:DNA binding"/>
    <property type="evidence" value="ECO:0007669"/>
    <property type="project" value="InterPro"/>
</dbReference>
<dbReference type="GO" id="GO:0003911">
    <property type="term" value="F:DNA ligase (NAD+) activity"/>
    <property type="evidence" value="ECO:0007669"/>
    <property type="project" value="UniProtKB-UniRule"/>
</dbReference>
<dbReference type="GO" id="GO:0046872">
    <property type="term" value="F:metal ion binding"/>
    <property type="evidence" value="ECO:0007669"/>
    <property type="project" value="UniProtKB-KW"/>
</dbReference>
<dbReference type="GO" id="GO:0006281">
    <property type="term" value="P:DNA repair"/>
    <property type="evidence" value="ECO:0007669"/>
    <property type="project" value="UniProtKB-KW"/>
</dbReference>
<dbReference type="GO" id="GO:0006260">
    <property type="term" value="P:DNA replication"/>
    <property type="evidence" value="ECO:0007669"/>
    <property type="project" value="UniProtKB-KW"/>
</dbReference>
<dbReference type="CDD" id="cd17748">
    <property type="entry name" value="BRCT_DNA_ligase_like"/>
    <property type="match status" value="1"/>
</dbReference>
<dbReference type="CDD" id="cd00114">
    <property type="entry name" value="LIGANc"/>
    <property type="match status" value="1"/>
</dbReference>
<dbReference type="FunFam" id="1.10.150.20:FF:000007">
    <property type="entry name" value="DNA ligase"/>
    <property type="match status" value="1"/>
</dbReference>
<dbReference type="FunFam" id="2.40.50.140:FF:000012">
    <property type="entry name" value="DNA ligase"/>
    <property type="match status" value="1"/>
</dbReference>
<dbReference type="FunFam" id="3.30.470.30:FF:000001">
    <property type="entry name" value="DNA ligase"/>
    <property type="match status" value="1"/>
</dbReference>
<dbReference type="Gene3D" id="6.20.10.30">
    <property type="match status" value="1"/>
</dbReference>
<dbReference type="Gene3D" id="1.10.150.20">
    <property type="entry name" value="5' to 3' exonuclease, C-terminal subdomain"/>
    <property type="match status" value="2"/>
</dbReference>
<dbReference type="Gene3D" id="3.40.50.10190">
    <property type="entry name" value="BRCT domain"/>
    <property type="match status" value="1"/>
</dbReference>
<dbReference type="Gene3D" id="3.30.470.30">
    <property type="entry name" value="DNA ligase/mRNA capping enzyme"/>
    <property type="match status" value="1"/>
</dbReference>
<dbReference type="Gene3D" id="1.10.287.610">
    <property type="entry name" value="Helix hairpin bin"/>
    <property type="match status" value="1"/>
</dbReference>
<dbReference type="Gene3D" id="2.40.50.140">
    <property type="entry name" value="Nucleic acid-binding proteins"/>
    <property type="match status" value="1"/>
</dbReference>
<dbReference type="HAMAP" id="MF_01588">
    <property type="entry name" value="DNA_ligase_A"/>
    <property type="match status" value="1"/>
</dbReference>
<dbReference type="InterPro" id="IPR001357">
    <property type="entry name" value="BRCT_dom"/>
</dbReference>
<dbReference type="InterPro" id="IPR036420">
    <property type="entry name" value="BRCT_dom_sf"/>
</dbReference>
<dbReference type="InterPro" id="IPR041663">
    <property type="entry name" value="DisA/LigA_HHH"/>
</dbReference>
<dbReference type="InterPro" id="IPR001679">
    <property type="entry name" value="DNA_ligase"/>
</dbReference>
<dbReference type="InterPro" id="IPR033136">
    <property type="entry name" value="DNA_ligase_CS"/>
</dbReference>
<dbReference type="InterPro" id="IPR013839">
    <property type="entry name" value="DNAligase_adenylation"/>
</dbReference>
<dbReference type="InterPro" id="IPR013840">
    <property type="entry name" value="DNAligase_N"/>
</dbReference>
<dbReference type="InterPro" id="IPR003583">
    <property type="entry name" value="Hlx-hairpin-Hlx_DNA-bd_motif"/>
</dbReference>
<dbReference type="InterPro" id="IPR012340">
    <property type="entry name" value="NA-bd_OB-fold"/>
</dbReference>
<dbReference type="InterPro" id="IPR004150">
    <property type="entry name" value="NAD_DNA_ligase_OB"/>
</dbReference>
<dbReference type="InterPro" id="IPR010994">
    <property type="entry name" value="RuvA_2-like"/>
</dbReference>
<dbReference type="InterPro" id="IPR004149">
    <property type="entry name" value="Znf_DNAligase_C4"/>
</dbReference>
<dbReference type="NCBIfam" id="TIGR00575">
    <property type="entry name" value="dnlj"/>
    <property type="match status" value="1"/>
</dbReference>
<dbReference type="NCBIfam" id="NF005932">
    <property type="entry name" value="PRK07956.1"/>
    <property type="match status" value="1"/>
</dbReference>
<dbReference type="PANTHER" id="PTHR23389">
    <property type="entry name" value="CHROMOSOME TRANSMISSION FIDELITY FACTOR 18"/>
    <property type="match status" value="1"/>
</dbReference>
<dbReference type="PANTHER" id="PTHR23389:SF9">
    <property type="entry name" value="DNA LIGASE"/>
    <property type="match status" value="1"/>
</dbReference>
<dbReference type="Pfam" id="PF00533">
    <property type="entry name" value="BRCT"/>
    <property type="match status" value="1"/>
</dbReference>
<dbReference type="Pfam" id="PF01653">
    <property type="entry name" value="DNA_ligase_aden"/>
    <property type="match status" value="1"/>
</dbReference>
<dbReference type="Pfam" id="PF03120">
    <property type="entry name" value="DNA_ligase_OB"/>
    <property type="match status" value="1"/>
</dbReference>
<dbReference type="Pfam" id="PF03119">
    <property type="entry name" value="DNA_ligase_ZBD"/>
    <property type="match status" value="1"/>
</dbReference>
<dbReference type="Pfam" id="PF12826">
    <property type="entry name" value="HHH_2"/>
    <property type="match status" value="1"/>
</dbReference>
<dbReference type="Pfam" id="PF22745">
    <property type="entry name" value="Nlig-Ia"/>
    <property type="match status" value="1"/>
</dbReference>
<dbReference type="PIRSF" id="PIRSF001604">
    <property type="entry name" value="LigA"/>
    <property type="match status" value="1"/>
</dbReference>
<dbReference type="SMART" id="SM00292">
    <property type="entry name" value="BRCT"/>
    <property type="match status" value="1"/>
</dbReference>
<dbReference type="SMART" id="SM00278">
    <property type="entry name" value="HhH1"/>
    <property type="match status" value="4"/>
</dbReference>
<dbReference type="SMART" id="SM00532">
    <property type="entry name" value="LIGANc"/>
    <property type="match status" value="1"/>
</dbReference>
<dbReference type="SUPFAM" id="SSF52113">
    <property type="entry name" value="BRCT domain"/>
    <property type="match status" value="1"/>
</dbReference>
<dbReference type="SUPFAM" id="SSF56091">
    <property type="entry name" value="DNA ligase/mRNA capping enzyme, catalytic domain"/>
    <property type="match status" value="1"/>
</dbReference>
<dbReference type="SUPFAM" id="SSF50249">
    <property type="entry name" value="Nucleic acid-binding proteins"/>
    <property type="match status" value="1"/>
</dbReference>
<dbReference type="SUPFAM" id="SSF47781">
    <property type="entry name" value="RuvA domain 2-like"/>
    <property type="match status" value="1"/>
</dbReference>
<dbReference type="PROSITE" id="PS50172">
    <property type="entry name" value="BRCT"/>
    <property type="match status" value="1"/>
</dbReference>
<dbReference type="PROSITE" id="PS01056">
    <property type="entry name" value="DNA_LIGASE_N2"/>
    <property type="match status" value="1"/>
</dbReference>